<protein>
    <recommendedName>
        <fullName evidence="3">Nemertide alpha-4</fullName>
    </recommendedName>
</protein>
<evidence type="ECO:0000250" key="1">
    <source>
        <dbReference type="UniProtKB" id="P0DM24"/>
    </source>
</evidence>
<evidence type="ECO:0000269" key="2">
    <source>
    </source>
</evidence>
<evidence type="ECO:0000303" key="3">
    <source>
    </source>
</evidence>
<evidence type="ECO:0000305" key="4"/>
<evidence type="ECO:0000305" key="5">
    <source>
    </source>
</evidence>
<evidence type="ECO:0000305" key="6">
    <source>
    </source>
</evidence>
<feature type="chain" id="PRO_0000454427" description="Nemertide alpha-4" evidence="5">
    <location>
        <begin position="1"/>
        <end position="31"/>
    </location>
</feature>
<feature type="site" description="Hydrophobic/aromatic residue important for potent activity" evidence="6">
    <location>
        <position position="8"/>
    </location>
</feature>
<feature type="modified residue" description="4-hydroxyproline" evidence="1">
    <location>
        <position position="28"/>
    </location>
</feature>
<feature type="modified residue" description="4-hydroxyproline" evidence="1">
    <location>
        <position position="29"/>
    </location>
</feature>
<feature type="disulfide bond" evidence="1">
    <location>
        <begin position="2"/>
        <end position="16"/>
    </location>
</feature>
<feature type="disulfide bond" evidence="1">
    <location>
        <begin position="9"/>
        <end position="20"/>
    </location>
</feature>
<feature type="disulfide bond" evidence="1">
    <location>
        <begin position="15"/>
        <end position="26"/>
    </location>
</feature>
<proteinExistence type="inferred from homology"/>
<keyword id="KW-1015">Disulfide bond</keyword>
<keyword id="KW-0379">Hydroxylation</keyword>
<keyword id="KW-0872">Ion channel impairing toxin</keyword>
<keyword id="KW-0960">Knottin</keyword>
<keyword id="KW-0528">Neurotoxin</keyword>
<keyword id="KW-0964">Secreted</keyword>
<keyword id="KW-0800">Toxin</keyword>
<keyword id="KW-0738">Voltage-gated sodium channel impairing toxin</keyword>
<dbReference type="SMR" id="P0DQS6"/>
<dbReference type="GO" id="GO:0005576">
    <property type="term" value="C:extracellular region"/>
    <property type="evidence" value="ECO:0007669"/>
    <property type="project" value="UniProtKB-SubCell"/>
</dbReference>
<dbReference type="GO" id="GO:0017080">
    <property type="term" value="F:sodium channel regulator activity"/>
    <property type="evidence" value="ECO:0007669"/>
    <property type="project" value="UniProtKB-KW"/>
</dbReference>
<dbReference type="GO" id="GO:0090729">
    <property type="term" value="F:toxin activity"/>
    <property type="evidence" value="ECO:0007669"/>
    <property type="project" value="UniProtKB-KW"/>
</dbReference>
<organism>
    <name type="scientific">Lineus sanguineus</name>
    <name type="common">Ribbon worm</name>
    <dbReference type="NCBI Taxonomy" id="187800"/>
    <lineage>
        <taxon>Eukaryota</taxon>
        <taxon>Metazoa</taxon>
        <taxon>Spiralia</taxon>
        <taxon>Lophotrochozoa</taxon>
        <taxon>Nemertea</taxon>
        <taxon>Pilidiophora</taxon>
        <taxon>Heteronemertea</taxon>
        <taxon>Lineidae</taxon>
        <taxon>Lineus</taxon>
    </lineage>
</organism>
<comment type="function">
    <text evidence="1 2">Potent toxin, demonstrating strong inhibitory effects on insect sodium channels (Nav) and reduced activity on mammalian sodium channels (PubMed:34445875). Potently inhibits inactivation of insect sodium channels of B.germanica (BgNav1) (EC(50)=11.1 nM) (PubMed:34445875). Also delays the inactivation of most mammalian Nav (human Nav1.1/SCN1A; EC(50)=92 nM, rat Nav1.2/SCN2A; EC(50)=134.2 nM, rat Nav1.3/SCN3A; EC(50)=12.9 nM, rat Nav1.4/SCN4A; EC(50)=14.6 nM, human Nav1.5/SCN5A; EC(50)=27.8 nM, mouse Nav1.6/SCN8A; EC(50)=123.6 nM, human Nav1.9/SCN9A; EC(50)=80.5 nM) (PubMed:34445875). Inactivation is completely prevented by a concentration of 1 uM, resulting in sustained, non-inactivating currents (By similarity). In addition, the toxin significantly enhances the recovery from inactivation, and the open state is not required for the toxin to interact with the channel (By similarity). In vivo, injection into brine shrimp (Artemia salina) stops movement or causes death after 24 hours (EC(50)=0.4 uM) (PubMed:34445875).</text>
</comment>
<comment type="subcellular location">
    <subcellularLocation>
        <location evidence="1">Secreted</location>
    </subcellularLocation>
</comment>
<comment type="tissue specificity">
    <text evidence="1">Confined to the epidermis and to the mucus layer.</text>
</comment>
<comment type="domain">
    <text evidence="1">The presence of a 'disulfide through disulfide knot' structurally defines this protein as a knottin.</text>
</comment>
<comment type="miscellaneous">
    <text evidence="2">Negative results: does not show effect on rat Nav1.8/SCN10A.</text>
</comment>
<comment type="similarity">
    <text evidence="4">Belongs to the nemertide family.</text>
</comment>
<sequence length="31" mass="3300">GCISTGSFCTLSKGCCTKNCGWNFKCNPPNQ</sequence>
<accession>P0DQS6</accession>
<name>NEMA4_LINSA</name>
<reference key="1">
    <citation type="journal article" date="2018" name="Sci. Rep.">
        <title>Peptide ion channel toxins from the bootlace worm, the longest animal on Earth.</title>
        <authorList>
            <person name="Jacobsson E."/>
            <person name="Andersson H.S."/>
            <person name="Strand M."/>
            <person name="Peigneur S."/>
            <person name="Eriksson C."/>
            <person name="Loden H."/>
            <person name="Shariatgorji M."/>
            <person name="Andren P.E."/>
            <person name="Lebbe E.K.M."/>
            <person name="Rosengren K.J."/>
            <person name="Tytgat J."/>
            <person name="Goeransson U."/>
        </authorList>
    </citation>
    <scope>NUCLEOTIDE SEQUENCE [MRNA]</scope>
</reference>
<reference key="2">
    <citation type="journal article" date="2021" name="J. Nat. Prod.">
        <title>Functional characterization of the nemertide alpha family of peptide toxins.</title>
        <authorList>
            <person name="Jacobsson E."/>
            <person name="Peigneur S."/>
            <person name="Andersson H.S."/>
            <person name="Laborde Q."/>
            <person name="Strand M."/>
            <person name="Tytgat J."/>
            <person name="Goeransson U."/>
        </authorList>
    </citation>
    <scope>NUCLEOTIDE SEQUENCE [MRNA]</scope>
    <scope>SYNTHESIS</scope>
    <scope>FUNCTION</scope>
    <scope>BIOASSAY</scope>
</reference>